<keyword id="KW-0067">ATP-binding</keyword>
<keyword id="KW-0460">Magnesium</keyword>
<keyword id="KW-0547">Nucleotide-binding</keyword>
<keyword id="KW-0808">Transferase</keyword>
<keyword id="KW-0819">tRNA processing</keyword>
<organism>
    <name type="scientific">Borrelia recurrentis (strain A1)</name>
    <dbReference type="NCBI Taxonomy" id="412418"/>
    <lineage>
        <taxon>Bacteria</taxon>
        <taxon>Pseudomonadati</taxon>
        <taxon>Spirochaetota</taxon>
        <taxon>Spirochaetia</taxon>
        <taxon>Spirochaetales</taxon>
        <taxon>Borreliaceae</taxon>
        <taxon>Borrelia</taxon>
    </lineage>
</organism>
<feature type="chain" id="PRO_1000098645" description="tRNA dimethylallyltransferase">
    <location>
        <begin position="1"/>
        <end position="300"/>
    </location>
</feature>
<feature type="region of interest" description="Interaction with substrate tRNA" evidence="1">
    <location>
        <begin position="35"/>
        <end position="38"/>
    </location>
</feature>
<feature type="binding site" evidence="1">
    <location>
        <begin position="11"/>
        <end position="18"/>
    </location>
    <ligand>
        <name>ATP</name>
        <dbReference type="ChEBI" id="CHEBI:30616"/>
    </ligand>
</feature>
<feature type="binding site" evidence="1">
    <location>
        <begin position="13"/>
        <end position="18"/>
    </location>
    <ligand>
        <name>substrate</name>
    </ligand>
</feature>
<feature type="site" description="Interaction with substrate tRNA" evidence="1">
    <location>
        <position position="101"/>
    </location>
</feature>
<feature type="site" description="Interaction with substrate tRNA" evidence="1">
    <location>
        <position position="123"/>
    </location>
</feature>
<proteinExistence type="inferred from homology"/>
<gene>
    <name evidence="1" type="primary">miaA</name>
    <name type="ordered locus">BRE_831</name>
</gene>
<protein>
    <recommendedName>
        <fullName evidence="1">tRNA dimethylallyltransferase</fullName>
        <ecNumber evidence="1">2.5.1.75</ecNumber>
    </recommendedName>
    <alternativeName>
        <fullName evidence="1">Dimethylallyl diphosphate:tRNA dimethylallyltransferase</fullName>
        <shortName evidence="1">DMAPP:tRNA dimethylallyltransferase</shortName>
        <shortName evidence="1">DMATase</shortName>
    </alternativeName>
    <alternativeName>
        <fullName evidence="1">Isopentenyl-diphosphate:tRNA isopentenyltransferase</fullName>
        <shortName evidence="1">IPP transferase</shortName>
        <shortName evidence="1">IPPT</shortName>
        <shortName evidence="1">IPTase</shortName>
    </alternativeName>
</protein>
<dbReference type="EC" id="2.5.1.75" evidence="1"/>
<dbReference type="EMBL" id="CP000993">
    <property type="protein sequence ID" value="ACH95042.1"/>
    <property type="molecule type" value="Genomic_DNA"/>
</dbReference>
<dbReference type="RefSeq" id="WP_012539194.1">
    <property type="nucleotide sequence ID" value="NC_011244.1"/>
</dbReference>
<dbReference type="SMR" id="B5RQF8"/>
<dbReference type="KEGG" id="bre:BRE_831"/>
<dbReference type="HOGENOM" id="CLU_032616_0_2_12"/>
<dbReference type="Proteomes" id="UP000000612">
    <property type="component" value="Chromosome"/>
</dbReference>
<dbReference type="GO" id="GO:0005524">
    <property type="term" value="F:ATP binding"/>
    <property type="evidence" value="ECO:0007669"/>
    <property type="project" value="UniProtKB-UniRule"/>
</dbReference>
<dbReference type="GO" id="GO:0052381">
    <property type="term" value="F:tRNA dimethylallyltransferase activity"/>
    <property type="evidence" value="ECO:0007669"/>
    <property type="project" value="UniProtKB-UniRule"/>
</dbReference>
<dbReference type="GO" id="GO:0006400">
    <property type="term" value="P:tRNA modification"/>
    <property type="evidence" value="ECO:0007669"/>
    <property type="project" value="TreeGrafter"/>
</dbReference>
<dbReference type="Gene3D" id="1.10.20.140">
    <property type="match status" value="1"/>
</dbReference>
<dbReference type="Gene3D" id="3.40.50.300">
    <property type="entry name" value="P-loop containing nucleotide triphosphate hydrolases"/>
    <property type="match status" value="1"/>
</dbReference>
<dbReference type="HAMAP" id="MF_00185">
    <property type="entry name" value="IPP_trans"/>
    <property type="match status" value="1"/>
</dbReference>
<dbReference type="InterPro" id="IPR039657">
    <property type="entry name" value="Dimethylallyltransferase"/>
</dbReference>
<dbReference type="InterPro" id="IPR018022">
    <property type="entry name" value="IPT"/>
</dbReference>
<dbReference type="InterPro" id="IPR027417">
    <property type="entry name" value="P-loop_NTPase"/>
</dbReference>
<dbReference type="NCBIfam" id="TIGR00174">
    <property type="entry name" value="miaA"/>
    <property type="match status" value="1"/>
</dbReference>
<dbReference type="PANTHER" id="PTHR11088">
    <property type="entry name" value="TRNA DIMETHYLALLYLTRANSFERASE"/>
    <property type="match status" value="1"/>
</dbReference>
<dbReference type="PANTHER" id="PTHR11088:SF60">
    <property type="entry name" value="TRNA DIMETHYLALLYLTRANSFERASE"/>
    <property type="match status" value="1"/>
</dbReference>
<dbReference type="Pfam" id="PF01715">
    <property type="entry name" value="IPPT"/>
    <property type="match status" value="1"/>
</dbReference>
<dbReference type="SUPFAM" id="SSF52540">
    <property type="entry name" value="P-loop containing nucleoside triphosphate hydrolases"/>
    <property type="match status" value="1"/>
</dbReference>
<name>MIAA_BORRA</name>
<comment type="function">
    <text evidence="1">Catalyzes the transfer of a dimethylallyl group onto the adenine at position 37 in tRNAs that read codons beginning with uridine, leading to the formation of N6-(dimethylallyl)adenosine (i(6)A).</text>
</comment>
<comment type="catalytic activity">
    <reaction evidence="1">
        <text>adenosine(37) in tRNA + dimethylallyl diphosphate = N(6)-dimethylallyladenosine(37) in tRNA + diphosphate</text>
        <dbReference type="Rhea" id="RHEA:26482"/>
        <dbReference type="Rhea" id="RHEA-COMP:10162"/>
        <dbReference type="Rhea" id="RHEA-COMP:10375"/>
        <dbReference type="ChEBI" id="CHEBI:33019"/>
        <dbReference type="ChEBI" id="CHEBI:57623"/>
        <dbReference type="ChEBI" id="CHEBI:74411"/>
        <dbReference type="ChEBI" id="CHEBI:74415"/>
        <dbReference type="EC" id="2.5.1.75"/>
    </reaction>
</comment>
<comment type="cofactor">
    <cofactor evidence="1">
        <name>Mg(2+)</name>
        <dbReference type="ChEBI" id="CHEBI:18420"/>
    </cofactor>
</comment>
<comment type="subunit">
    <text evidence="1">Monomer.</text>
</comment>
<comment type="similarity">
    <text evidence="1">Belongs to the IPP transferase family.</text>
</comment>
<reference key="1">
    <citation type="journal article" date="2008" name="PLoS Genet.">
        <title>The genome of Borrelia recurrentis, the agent of deadly louse-borne relapsing fever, is a degraded subset of tick-borne Borrelia duttonii.</title>
        <authorList>
            <person name="Lescot M."/>
            <person name="Audic S."/>
            <person name="Robert C."/>
            <person name="Nguyen T.T."/>
            <person name="Blanc G."/>
            <person name="Cutler S.J."/>
            <person name="Wincker P."/>
            <person name="Couloux A."/>
            <person name="Claverie J.-M."/>
            <person name="Raoult D."/>
            <person name="Drancourt M."/>
        </authorList>
    </citation>
    <scope>NUCLEOTIDE SEQUENCE [LARGE SCALE GENOMIC DNA]</scope>
    <source>
        <strain>A1</strain>
    </source>
</reference>
<accession>B5RQF8</accession>
<sequence length="300" mass="35318">MKTNKIVFIFGPTAVGKSDILFHFPKGVAEVISVDSIQVYKEFDIASCKPSIELRSHIRHHLVDFLEPIYEYNLGIFYKESCKIIESLREQKKIPIFVGGSAFYFKHLKYGLPSAPPVSDKVRLYINNLFIRMGKDYLLEELRRVDFKRYESINQNDIYRIKRSLEVYFQTGIPISQFLQRENMFENIVAIGLRRPMDEMKSRIISRVKNMIDCGLLDEIKSLLGKGYDEKTPAFKGIGYREFLLWRSRPCYLLNDIINLIVKNSFLYVKRQMTFFNKLPNVLWFHPDDDLKNILDLIFV</sequence>
<evidence type="ECO:0000255" key="1">
    <source>
        <dbReference type="HAMAP-Rule" id="MF_00185"/>
    </source>
</evidence>